<organism>
    <name type="scientific">Shigella flexneri</name>
    <dbReference type="NCBI Taxonomy" id="623"/>
    <lineage>
        <taxon>Bacteria</taxon>
        <taxon>Pseudomonadati</taxon>
        <taxon>Pseudomonadota</taxon>
        <taxon>Gammaproteobacteria</taxon>
        <taxon>Enterobacterales</taxon>
        <taxon>Enterobacteriaceae</taxon>
        <taxon>Shigella</taxon>
    </lineage>
</organism>
<keyword id="KW-0574">Periplasm</keyword>
<keyword id="KW-1185">Reference proteome</keyword>
<keyword id="KW-0732">Signal</keyword>
<dbReference type="EMBL" id="AE005674">
    <property type="status" value="NOT_ANNOTATED_CDS"/>
    <property type="molecule type" value="Genomic_DNA"/>
</dbReference>
<dbReference type="EMBL" id="AE014073">
    <property type="protein sequence ID" value="AAP19553.1"/>
    <property type="molecule type" value="Genomic_DNA"/>
</dbReference>
<dbReference type="RefSeq" id="WP_000492914.1">
    <property type="nucleotide sequence ID" value="NZ_WPGW01000113.1"/>
</dbReference>
<dbReference type="SMR" id="P0AF89"/>
<dbReference type="GeneID" id="93777624"/>
<dbReference type="KEGG" id="sfx:S4624"/>
<dbReference type="PATRIC" id="fig|623.156.peg.2939"/>
<dbReference type="HOGENOM" id="CLU_158602_0_0_6"/>
<dbReference type="Proteomes" id="UP000001006">
    <property type="component" value="Chromosome"/>
</dbReference>
<dbReference type="Proteomes" id="UP000002673">
    <property type="component" value="Chromosome"/>
</dbReference>
<dbReference type="GO" id="GO:0042597">
    <property type="term" value="C:periplasmic space"/>
    <property type="evidence" value="ECO:0007669"/>
    <property type="project" value="UniProtKB-SubCell"/>
</dbReference>
<dbReference type="Gene3D" id="3.30.1660.10">
    <property type="entry name" value="Flavin-binding protein dodecin"/>
    <property type="match status" value="1"/>
</dbReference>
<dbReference type="InterPro" id="IPR051096">
    <property type="entry name" value="BhsA/McbA_stress_biofilm_assoc"/>
</dbReference>
<dbReference type="InterPro" id="IPR025543">
    <property type="entry name" value="Dodecin-like"/>
</dbReference>
<dbReference type="InterPro" id="IPR036275">
    <property type="entry name" value="YdgH-like_sf"/>
</dbReference>
<dbReference type="InterPro" id="IPR010854">
    <property type="entry name" value="YdgH/BhsA/McbA-like_dom"/>
</dbReference>
<dbReference type="PANTHER" id="PTHR34156:SF6">
    <property type="entry name" value="OUTER MEMBRANE PROTEIN"/>
    <property type="match status" value="1"/>
</dbReference>
<dbReference type="PANTHER" id="PTHR34156">
    <property type="entry name" value="OUTER MEMBRANE PROTEIN-RELATED-RELATED"/>
    <property type="match status" value="1"/>
</dbReference>
<dbReference type="Pfam" id="PF07338">
    <property type="entry name" value="YdgH_BhsA-like"/>
    <property type="match status" value="1"/>
</dbReference>
<dbReference type="SUPFAM" id="SSF159871">
    <property type="entry name" value="YdgH-like"/>
    <property type="match status" value="1"/>
</dbReference>
<reference key="1">
    <citation type="journal article" date="2002" name="Nucleic Acids Res.">
        <title>Genome sequence of Shigella flexneri 2a: insights into pathogenicity through comparison with genomes of Escherichia coli K12 and O157.</title>
        <authorList>
            <person name="Jin Q."/>
            <person name="Yuan Z."/>
            <person name="Xu J."/>
            <person name="Wang Y."/>
            <person name="Shen Y."/>
            <person name="Lu W."/>
            <person name="Wang J."/>
            <person name="Liu H."/>
            <person name="Yang J."/>
            <person name="Yang F."/>
            <person name="Zhang X."/>
            <person name="Zhang J."/>
            <person name="Yang G."/>
            <person name="Wu H."/>
            <person name="Qu D."/>
            <person name="Dong J."/>
            <person name="Sun L."/>
            <person name="Xue Y."/>
            <person name="Zhao A."/>
            <person name="Gao Y."/>
            <person name="Zhu J."/>
            <person name="Kan B."/>
            <person name="Ding K."/>
            <person name="Chen S."/>
            <person name="Cheng H."/>
            <person name="Yao Z."/>
            <person name="He B."/>
            <person name="Chen R."/>
            <person name="Ma D."/>
            <person name="Qiang B."/>
            <person name="Wen Y."/>
            <person name="Hou Y."/>
            <person name="Yu J."/>
        </authorList>
    </citation>
    <scope>NUCLEOTIDE SEQUENCE [LARGE SCALE GENOMIC DNA]</scope>
    <source>
        <strain>301 / Serotype 2a</strain>
    </source>
</reference>
<reference key="2">
    <citation type="journal article" date="2003" name="Infect. Immun.">
        <title>Complete genome sequence and comparative genomics of Shigella flexneri serotype 2a strain 2457T.</title>
        <authorList>
            <person name="Wei J."/>
            <person name="Goldberg M.B."/>
            <person name="Burland V."/>
            <person name="Venkatesan M.M."/>
            <person name="Deng W."/>
            <person name="Fournier G."/>
            <person name="Mayhew G.F."/>
            <person name="Plunkett G. III"/>
            <person name="Rose D.J."/>
            <person name="Darling A."/>
            <person name="Mau B."/>
            <person name="Perna N.T."/>
            <person name="Payne S.M."/>
            <person name="Runyen-Janecky L.J."/>
            <person name="Zhou S."/>
            <person name="Schwartz D.C."/>
            <person name="Blattner F.R."/>
        </authorList>
    </citation>
    <scope>NUCLEOTIDE SEQUENCE [LARGE SCALE GENOMIC DNA]</scope>
    <source>
        <strain>ATCC 700930 / 2457T / Serotype 2a</strain>
    </source>
</reference>
<protein>
    <recommendedName>
        <fullName>Uncharacterized protein YjfY</fullName>
    </recommendedName>
</protein>
<sequence length="91" mass="10149">MFSRVLALLAVLLLSANTWAAIEINNHQARNMDDVQSLGVIYINHNFATESEARQALNEETDAQGATYYHVILMREPGSNGNMHASADIYR</sequence>
<comment type="subcellular location">
    <subcellularLocation>
        <location evidence="2">Periplasm</location>
    </subcellularLocation>
</comment>
<comment type="similarity">
    <text evidence="2">Belongs to the BhsA/McbA family.</text>
</comment>
<gene>
    <name type="primary">yjfY</name>
    <name type="ordered locus">SF4353.1</name>
    <name type="ordered locus">S4624</name>
</gene>
<accession>P0AF89</accession>
<accession>P39307</accession>
<feature type="signal peptide" evidence="1">
    <location>
        <begin position="1"/>
        <end position="20"/>
    </location>
</feature>
<feature type="chain" id="PRO_0000044599" description="Uncharacterized protein YjfY">
    <location>
        <begin position="21"/>
        <end position="91"/>
    </location>
</feature>
<evidence type="ECO:0000255" key="1"/>
<evidence type="ECO:0000305" key="2"/>
<proteinExistence type="inferred from homology"/>
<name>YJFY_SHIFL</name>